<gene>
    <name type="primary">MT-CO3</name>
    <name type="synonym">COIII</name>
    <name type="synonym">COXIII</name>
    <name type="synonym">MTCO3</name>
</gene>
<dbReference type="EC" id="7.1.1.9"/>
<dbReference type="EMBL" id="Y07726">
    <property type="protein sequence ID" value="CAA69012.1"/>
    <property type="molecule type" value="Genomic_DNA"/>
</dbReference>
<dbReference type="RefSeq" id="NP_007439.1">
    <property type="nucleotide sequence ID" value="NC_001808.1"/>
</dbReference>
<dbReference type="SMR" id="O03201"/>
<dbReference type="GeneID" id="808103"/>
<dbReference type="CTD" id="4514"/>
<dbReference type="OMA" id="SIYWWGS"/>
<dbReference type="GO" id="GO:0005743">
    <property type="term" value="C:mitochondrial inner membrane"/>
    <property type="evidence" value="ECO:0007669"/>
    <property type="project" value="UniProtKB-SubCell"/>
</dbReference>
<dbReference type="GO" id="GO:0045277">
    <property type="term" value="C:respiratory chain complex IV"/>
    <property type="evidence" value="ECO:0000250"/>
    <property type="project" value="UniProtKB"/>
</dbReference>
<dbReference type="GO" id="GO:0004129">
    <property type="term" value="F:cytochrome-c oxidase activity"/>
    <property type="evidence" value="ECO:0007669"/>
    <property type="project" value="UniProtKB-EC"/>
</dbReference>
<dbReference type="GO" id="GO:0006123">
    <property type="term" value="P:mitochondrial electron transport, cytochrome c to oxygen"/>
    <property type="evidence" value="ECO:0007669"/>
    <property type="project" value="TreeGrafter"/>
</dbReference>
<dbReference type="GO" id="GO:0008535">
    <property type="term" value="P:respiratory chain complex IV assembly"/>
    <property type="evidence" value="ECO:0000250"/>
    <property type="project" value="UniProtKB"/>
</dbReference>
<dbReference type="CDD" id="cd01665">
    <property type="entry name" value="Cyt_c_Oxidase_III"/>
    <property type="match status" value="1"/>
</dbReference>
<dbReference type="FunFam" id="1.10.287.70:FF:000048">
    <property type="entry name" value="Cytochrome c oxidase subunit 3"/>
    <property type="match status" value="1"/>
</dbReference>
<dbReference type="FunFam" id="1.20.120.80:FF:000002">
    <property type="entry name" value="Cytochrome c oxidase subunit 3"/>
    <property type="match status" value="1"/>
</dbReference>
<dbReference type="Gene3D" id="1.10.287.70">
    <property type="match status" value="1"/>
</dbReference>
<dbReference type="Gene3D" id="1.20.120.80">
    <property type="entry name" value="Cytochrome c oxidase, subunit III, four-helix bundle"/>
    <property type="match status" value="1"/>
</dbReference>
<dbReference type="InterPro" id="IPR024791">
    <property type="entry name" value="Cyt_c/ubiquinol_Oxase_su3"/>
</dbReference>
<dbReference type="InterPro" id="IPR033945">
    <property type="entry name" value="Cyt_c_oxase_su3_dom"/>
</dbReference>
<dbReference type="InterPro" id="IPR000298">
    <property type="entry name" value="Cyt_c_oxidase-like_su3"/>
</dbReference>
<dbReference type="InterPro" id="IPR035973">
    <property type="entry name" value="Cyt_c_oxidase_su3-like_sf"/>
</dbReference>
<dbReference type="InterPro" id="IPR013833">
    <property type="entry name" value="Cyt_c_oxidase_su3_a-hlx"/>
</dbReference>
<dbReference type="PANTHER" id="PTHR11403:SF7">
    <property type="entry name" value="CYTOCHROME C OXIDASE SUBUNIT 3"/>
    <property type="match status" value="1"/>
</dbReference>
<dbReference type="PANTHER" id="PTHR11403">
    <property type="entry name" value="CYTOCHROME C OXIDASE SUBUNIT III"/>
    <property type="match status" value="1"/>
</dbReference>
<dbReference type="Pfam" id="PF00510">
    <property type="entry name" value="COX3"/>
    <property type="match status" value="1"/>
</dbReference>
<dbReference type="SUPFAM" id="SSF81452">
    <property type="entry name" value="Cytochrome c oxidase subunit III-like"/>
    <property type="match status" value="1"/>
</dbReference>
<dbReference type="PROSITE" id="PS50253">
    <property type="entry name" value="COX3"/>
    <property type="match status" value="1"/>
</dbReference>
<proteinExistence type="inferred from homology"/>
<geneLocation type="mitochondrion"/>
<feature type="chain" id="PRO_0000183756" description="Cytochrome c oxidase subunit 3">
    <location>
        <begin position="1"/>
        <end position="261"/>
    </location>
</feature>
<feature type="topological domain" description="Mitochondrial matrix" evidence="1">
    <location>
        <begin position="1"/>
        <end position="15"/>
    </location>
</feature>
<feature type="transmembrane region" description="Helical; Name=I" evidence="1">
    <location>
        <begin position="16"/>
        <end position="34"/>
    </location>
</feature>
<feature type="topological domain" description="Mitochondrial intermembrane" evidence="1">
    <location>
        <begin position="35"/>
        <end position="40"/>
    </location>
</feature>
<feature type="transmembrane region" description="Helical; Name=II" evidence="1">
    <location>
        <begin position="41"/>
        <end position="66"/>
    </location>
</feature>
<feature type="topological domain" description="Mitochondrial matrix" evidence="1">
    <location>
        <begin position="67"/>
        <end position="72"/>
    </location>
</feature>
<feature type="transmembrane region" description="Helical; Name=III" evidence="1">
    <location>
        <begin position="73"/>
        <end position="105"/>
    </location>
</feature>
<feature type="topological domain" description="Mitochondrial intermembrane" evidence="1">
    <location>
        <begin position="106"/>
        <end position="128"/>
    </location>
</feature>
<feature type="transmembrane region" description="Helical; Name=IV" evidence="1">
    <location>
        <begin position="129"/>
        <end position="152"/>
    </location>
</feature>
<feature type="topological domain" description="Mitochondrial matrix" evidence="1">
    <location>
        <begin position="153"/>
        <end position="155"/>
    </location>
</feature>
<feature type="transmembrane region" description="Helical; Name=V" evidence="1">
    <location>
        <begin position="156"/>
        <end position="183"/>
    </location>
</feature>
<feature type="topological domain" description="Mitochondrial intermembrane" evidence="1">
    <location>
        <begin position="184"/>
        <end position="190"/>
    </location>
</feature>
<feature type="transmembrane region" description="Helical; Name=VI" evidence="1">
    <location>
        <begin position="191"/>
        <end position="223"/>
    </location>
</feature>
<feature type="topological domain" description="Mitochondrial matrix" evidence="1">
    <location>
        <begin position="224"/>
        <end position="232"/>
    </location>
</feature>
<feature type="transmembrane region" description="Helical; Name=VII" evidence="1">
    <location>
        <begin position="233"/>
        <end position="256"/>
    </location>
</feature>
<feature type="topological domain" description="Mitochondrial intermembrane" evidence="1">
    <location>
        <begin position="257"/>
        <end position="261"/>
    </location>
</feature>
<accession>O03201</accession>
<keyword id="KW-0472">Membrane</keyword>
<keyword id="KW-0496">Mitochondrion</keyword>
<keyword id="KW-0999">Mitochondrion inner membrane</keyword>
<keyword id="KW-1278">Translocase</keyword>
<keyword id="KW-0812">Transmembrane</keyword>
<keyword id="KW-1133">Transmembrane helix</keyword>
<reference key="1">
    <citation type="journal article" date="1997" name="Mol. Phylogenet. Evol.">
        <title>The complete mitochondrial DNA sequence of the white rhinoceros, Ceratotherium simum, and comparison with the mtDNA sequence of the Indian rhinoceros, Rhinoceros unicornis.</title>
        <authorList>
            <person name="Xu X."/>
            <person name="Arnason U."/>
        </authorList>
    </citation>
    <scope>NUCLEOTIDE SEQUENCE [GENOMIC DNA]</scope>
</reference>
<comment type="function">
    <text evidence="2">Component of the cytochrome c oxidase, the last enzyme in the mitochondrial electron transport chain which drives oxidative phosphorylation. The respiratory chain contains 3 multisubunit complexes succinate dehydrogenase (complex II, CII), ubiquinol-cytochrome c oxidoreductase (cytochrome b-c1 complex, complex III, CIII) and cytochrome c oxidase (complex IV, CIV), that cooperate to transfer electrons derived from NADH and succinate to molecular oxygen, creating an electrochemical gradient over the inner membrane that drives transmembrane transport and the ATP synthase. Cytochrome c oxidase is the component of the respiratory chain that catalyzes the reduction of oxygen to water. Electrons originating from reduced cytochrome c in the intermembrane space (IMS) are transferred via the dinuclear copper A center (CU(A)) of subunit 2 and heme A of subunit 1 to the active site in subunit 1, a binuclear center (BNC) formed by heme A3 and copper B (CU(B)). The BNC reduces molecular oxygen to 2 water molecules using 4 electrons from cytochrome c in the IMS and 4 protons from the mitochondrial matrix.</text>
</comment>
<comment type="catalytic activity">
    <reaction evidence="2">
        <text>4 Fe(II)-[cytochrome c] + O2 + 8 H(+)(in) = 4 Fe(III)-[cytochrome c] + 2 H2O + 4 H(+)(out)</text>
        <dbReference type="Rhea" id="RHEA:11436"/>
        <dbReference type="Rhea" id="RHEA-COMP:10350"/>
        <dbReference type="Rhea" id="RHEA-COMP:14399"/>
        <dbReference type="ChEBI" id="CHEBI:15377"/>
        <dbReference type="ChEBI" id="CHEBI:15378"/>
        <dbReference type="ChEBI" id="CHEBI:15379"/>
        <dbReference type="ChEBI" id="CHEBI:29033"/>
        <dbReference type="ChEBI" id="CHEBI:29034"/>
        <dbReference type="EC" id="7.1.1.9"/>
    </reaction>
    <physiologicalReaction direction="left-to-right" evidence="2">
        <dbReference type="Rhea" id="RHEA:11437"/>
    </physiologicalReaction>
</comment>
<comment type="subunit">
    <text evidence="1">Component of the cytochrome c oxidase (complex IV, CIV), a multisubunit enzyme composed of 14 subunits. The complex is composed of a catalytic core of 3 subunits MT-CO1, MT-CO2 and MT-CO3, encoded in the mitochondrial DNA, and 11 supernumerary subunits COX4I, COX5A, COX5B, COX6A, COX6B, COX6C, COX7A, COX7B, COX7C, COX8 and NDUFA4, which are encoded in the nuclear genome. The complex exists as a monomer or a dimer and forms supercomplexes (SCs) in the inner mitochondrial membrane with NADH-ubiquinone oxidoreductase (complex I, CI) and ubiquinol-cytochrome c oxidoreductase (cytochrome b-c1 complex, complex III, CIII), resulting in different assemblies (supercomplex SCI(1)III(2)IV(1) and megacomplex MCI(2)III(2)IV(2)).</text>
</comment>
<comment type="subcellular location">
    <subcellularLocation>
        <location evidence="1">Mitochondrion inner membrane</location>
        <topology evidence="1">Multi-pass membrane protein</topology>
    </subcellularLocation>
</comment>
<comment type="similarity">
    <text evidence="3">Belongs to the cytochrome c oxidase subunit 3 family.</text>
</comment>
<evidence type="ECO:0000250" key="1">
    <source>
        <dbReference type="UniProtKB" id="P00415"/>
    </source>
</evidence>
<evidence type="ECO:0000250" key="2">
    <source>
        <dbReference type="UniProtKB" id="P00420"/>
    </source>
</evidence>
<evidence type="ECO:0000305" key="3"/>
<organism>
    <name type="scientific">Ceratotherium simum</name>
    <name type="common">White rhinoceros</name>
    <name type="synonym">Square-lipped rhinoceros</name>
    <dbReference type="NCBI Taxonomy" id="9807"/>
    <lineage>
        <taxon>Eukaryota</taxon>
        <taxon>Metazoa</taxon>
        <taxon>Chordata</taxon>
        <taxon>Craniata</taxon>
        <taxon>Vertebrata</taxon>
        <taxon>Euteleostomi</taxon>
        <taxon>Mammalia</taxon>
        <taxon>Eutheria</taxon>
        <taxon>Laurasiatheria</taxon>
        <taxon>Perissodactyla</taxon>
        <taxon>Rhinocerotidae</taxon>
        <taxon>Ceratotherium</taxon>
    </lineage>
</organism>
<sequence length="261" mass="29960">MTHQTHAYHMVNPSPWPLTGALSALLMTSGLAMWFHYNSMLLLTLGLMTNLLTMYQWWRDIVRESTFQGHHTLVVQKGLRYGMILFIISEVFFFSGFFWAFYHSSLAPTPELGGCWPPTGIHPLNPMEVPLLNTSVLLASGVSITWAHHSLMEGNRKHMLQALFITISLGVYFTLLQASEYYEAPFTISDGIYGSTFFVATGFHGLHVIIGSTFLIVCFLRQLKFHFTSNHHFGFEAAAWYWHFVDVVWLFLYVSIYWWGS</sequence>
<protein>
    <recommendedName>
        <fullName>Cytochrome c oxidase subunit 3</fullName>
        <ecNumber>7.1.1.9</ecNumber>
    </recommendedName>
    <alternativeName>
        <fullName>Cytochrome c oxidase polypeptide III</fullName>
    </alternativeName>
</protein>
<name>COX3_CERSI</name>